<dbReference type="EMBL" id="AL939128">
    <property type="protein sequence ID" value="CAA22042.1"/>
    <property type="molecule type" value="Genomic_DNA"/>
</dbReference>
<dbReference type="PIR" id="T34735">
    <property type="entry name" value="T34735"/>
</dbReference>
<dbReference type="RefSeq" id="NP_630587.1">
    <property type="nucleotide sequence ID" value="NC_003888.3"/>
</dbReference>
<dbReference type="RefSeq" id="WP_003972473.1">
    <property type="nucleotide sequence ID" value="NZ_VNID01000002.1"/>
</dbReference>
<dbReference type="SMR" id="Q9ZC08"/>
<dbReference type="STRING" id="100226.gene:17764162"/>
<dbReference type="PaxDb" id="100226-SCO6505"/>
<dbReference type="KEGG" id="sco:SCO6505"/>
<dbReference type="PATRIC" id="fig|100226.15.peg.6607"/>
<dbReference type="eggNOG" id="ENOG503303G">
    <property type="taxonomic scope" value="Bacteria"/>
</dbReference>
<dbReference type="HOGENOM" id="CLU_107602_3_0_11"/>
<dbReference type="InParanoid" id="Q9ZC08"/>
<dbReference type="OrthoDB" id="532318at2"/>
<dbReference type="PhylomeDB" id="Q9ZC08"/>
<dbReference type="Proteomes" id="UP000001973">
    <property type="component" value="Chromosome"/>
</dbReference>
<dbReference type="GO" id="GO:0031411">
    <property type="term" value="C:gas vesicle"/>
    <property type="evidence" value="ECO:0007669"/>
    <property type="project" value="UniProtKB-SubCell"/>
</dbReference>
<dbReference type="GO" id="GO:0012506">
    <property type="term" value="C:vesicle membrane"/>
    <property type="evidence" value="ECO:0007669"/>
    <property type="project" value="InterPro"/>
</dbReference>
<dbReference type="GO" id="GO:0005198">
    <property type="term" value="F:structural molecule activity"/>
    <property type="evidence" value="ECO:0007669"/>
    <property type="project" value="InterPro"/>
</dbReference>
<dbReference type="InterPro" id="IPR000638">
    <property type="entry name" value="Gas-vesicle_GvpA-like"/>
</dbReference>
<dbReference type="InterPro" id="IPR050530">
    <property type="entry name" value="GvpA"/>
</dbReference>
<dbReference type="InterPro" id="IPR018493">
    <property type="entry name" value="GvpA-like_CS"/>
</dbReference>
<dbReference type="PANTHER" id="PTHR35344:SF4">
    <property type="entry name" value="GAS VESICLE PROTEIN A1"/>
    <property type="match status" value="1"/>
</dbReference>
<dbReference type="PANTHER" id="PTHR35344">
    <property type="entry name" value="GAS VESICLE STRUCTURAL PROTEIN 2-RELATED"/>
    <property type="match status" value="1"/>
</dbReference>
<dbReference type="Pfam" id="PF00741">
    <property type="entry name" value="Gas_vesicle"/>
    <property type="match status" value="1"/>
</dbReference>
<dbReference type="PROSITE" id="PS00234">
    <property type="entry name" value="GAS_VESICLE_A_1"/>
    <property type="match status" value="1"/>
</dbReference>
<protein>
    <recommendedName>
        <fullName>Probable gas vesicle protein J1</fullName>
        <shortName>GvpJ1</shortName>
    </recommendedName>
</protein>
<name>GVPJ1_STRCO</name>
<accession>Q9ZC08</accession>
<reference key="1">
    <citation type="journal article" date="2002" name="Nature">
        <title>Complete genome sequence of the model actinomycete Streptomyces coelicolor A3(2).</title>
        <authorList>
            <person name="Bentley S.D."/>
            <person name="Chater K.F."/>
            <person name="Cerdeno-Tarraga A.-M."/>
            <person name="Challis G.L."/>
            <person name="Thomson N.R."/>
            <person name="James K.D."/>
            <person name="Harris D.E."/>
            <person name="Quail M.A."/>
            <person name="Kieser H."/>
            <person name="Harper D."/>
            <person name="Bateman A."/>
            <person name="Brown S."/>
            <person name="Chandra G."/>
            <person name="Chen C.W."/>
            <person name="Collins M."/>
            <person name="Cronin A."/>
            <person name="Fraser A."/>
            <person name="Goble A."/>
            <person name="Hidalgo J."/>
            <person name="Hornsby T."/>
            <person name="Howarth S."/>
            <person name="Huang C.-H."/>
            <person name="Kieser T."/>
            <person name="Larke L."/>
            <person name="Murphy L.D."/>
            <person name="Oliver K."/>
            <person name="O'Neil S."/>
            <person name="Rabbinowitsch E."/>
            <person name="Rajandream M.A."/>
            <person name="Rutherford K.M."/>
            <person name="Rutter S."/>
            <person name="Seeger K."/>
            <person name="Saunders D."/>
            <person name="Sharp S."/>
            <person name="Squares R."/>
            <person name="Squares S."/>
            <person name="Taylor K."/>
            <person name="Warren T."/>
            <person name="Wietzorrek A."/>
            <person name="Woodward J.R."/>
            <person name="Barrell B.G."/>
            <person name="Parkhill J."/>
            <person name="Hopwood D.A."/>
        </authorList>
    </citation>
    <scope>NUCLEOTIDE SEQUENCE [LARGE SCALE GENOMIC DNA]</scope>
    <source>
        <strain>ATCC BAA-471 / A3(2) / M145</strain>
    </source>
</reference>
<reference key="2">
    <citation type="journal article" date="2018" name="Front. Microbiol.">
        <title>ArgR of Streptomyces coelicolor Is a Pleiotropic Transcriptional Regulator: Effect on the Transcriptome, Antibiotic Production, and Differentiation in Liquid Cultures.</title>
        <authorList>
            <person name="Botas A."/>
            <person name="Perez-Redondo R."/>
            <person name="Rodriguez-Garcia A."/>
            <person name="Alvarez-Alvarez R."/>
            <person name="Yaguee P."/>
            <person name="Manteca A."/>
            <person name="Liras P."/>
        </authorList>
    </citation>
    <scope>INDUCTION</scope>
    <source>
        <strain>ATCC BAA-471 / A3(2) / M145</strain>
    </source>
</reference>
<feature type="chain" id="PRO_0000200000" description="Probable gas vesicle protein J1">
    <location>
        <begin position="1"/>
        <end position="109"/>
    </location>
</feature>
<evidence type="ECO:0000250" key="1">
    <source>
        <dbReference type="UniProtKB" id="P24374"/>
    </source>
</evidence>
<evidence type="ECO:0000269" key="2">
    <source>
    </source>
</evidence>
<evidence type="ECO:0000303" key="3">
    <source>
    </source>
</evidence>
<evidence type="ECO:0000305" key="4"/>
<comment type="function">
    <text evidence="1 4">A minor component of the gas vesicle, might be involved in nucleating gas vesicle formation (By similarity). Gas vesicles (GV) are hollow, gas filled proteinaceous nanostructures. It is not clear what function GVs perform in soil bacteria (Probable).</text>
</comment>
<comment type="subunit">
    <text evidence="1">Interacts with GvpA.</text>
</comment>
<comment type="subcellular location">
    <subcellularLocation>
        <location evidence="1">Gas vesicle</location>
    </subcellularLocation>
</comment>
<comment type="induction">
    <text evidence="2">Constitutively transcribed at low levels, repressed by argR.</text>
</comment>
<comment type="similarity">
    <text evidence="4">Belongs to the gas vesicle GvpA family.</text>
</comment>
<keyword id="KW-0304">Gas vesicle</keyword>
<keyword id="KW-1185">Reference proteome</keyword>
<gene>
    <name type="primary">gvpJ1</name>
    <name evidence="3" type="synonym">gvpJ</name>
    <name type="ordered locus">SCO6505</name>
    <name type="ORF">SC1E6.14</name>
</gene>
<proteinExistence type="evidence at transcript level"/>
<organism>
    <name type="scientific">Streptomyces coelicolor (strain ATCC BAA-471 / A3(2) / M145)</name>
    <dbReference type="NCBI Taxonomy" id="100226"/>
    <lineage>
        <taxon>Bacteria</taxon>
        <taxon>Bacillati</taxon>
        <taxon>Actinomycetota</taxon>
        <taxon>Actinomycetes</taxon>
        <taxon>Kitasatosporales</taxon>
        <taxon>Streptomycetaceae</taxon>
        <taxon>Streptomyces</taxon>
        <taxon>Streptomyces albidoflavus group</taxon>
    </lineage>
</organism>
<sequence>MTTPSRLPDPYGQGQSANLADILERVLDKGVVIAGDIKINLLDIELLTIKLRLVVASVDKAKEMGIDWWESDPALSSRARHDELTRENAALRERLRELDPGRVPREEAP</sequence>